<accession>A9R076</accession>
<organism>
    <name type="scientific">Yersinia pestis bv. Antiqua (strain Angola)</name>
    <dbReference type="NCBI Taxonomy" id="349746"/>
    <lineage>
        <taxon>Bacteria</taxon>
        <taxon>Pseudomonadati</taxon>
        <taxon>Pseudomonadota</taxon>
        <taxon>Gammaproteobacteria</taxon>
        <taxon>Enterobacterales</taxon>
        <taxon>Yersiniaceae</taxon>
        <taxon>Yersinia</taxon>
    </lineage>
</organism>
<name>LSRD_YERPG</name>
<feature type="chain" id="PRO_0000351382" description="Autoinducer 2 import system permease protein LsrD">
    <location>
        <begin position="1"/>
        <end position="333"/>
    </location>
</feature>
<feature type="transmembrane region" description="Helical" evidence="2">
    <location>
        <begin position="7"/>
        <end position="27"/>
    </location>
</feature>
<feature type="transmembrane region" description="Helical" evidence="2">
    <location>
        <begin position="45"/>
        <end position="65"/>
    </location>
</feature>
<feature type="transmembrane region" description="Helical" evidence="2">
    <location>
        <begin position="67"/>
        <end position="87"/>
    </location>
</feature>
<feature type="transmembrane region" description="Helical" evidence="2">
    <location>
        <begin position="90"/>
        <end position="110"/>
    </location>
</feature>
<feature type="transmembrane region" description="Helical" evidence="2">
    <location>
        <begin position="118"/>
        <end position="138"/>
    </location>
</feature>
<feature type="transmembrane region" description="Helical" evidence="2">
    <location>
        <begin position="162"/>
        <end position="182"/>
    </location>
</feature>
<feature type="transmembrane region" description="Helical" evidence="2">
    <location>
        <begin position="212"/>
        <end position="232"/>
    </location>
</feature>
<feature type="transmembrane region" description="Helical" evidence="2">
    <location>
        <begin position="240"/>
        <end position="260"/>
    </location>
</feature>
<feature type="transmembrane region" description="Helical" evidence="2">
    <location>
        <begin position="261"/>
        <end position="281"/>
    </location>
</feature>
<feature type="transmembrane region" description="Helical" evidence="2">
    <location>
        <begin position="288"/>
        <end position="308"/>
    </location>
</feature>
<protein>
    <recommendedName>
        <fullName>Autoinducer 2 import system permease protein LsrD</fullName>
        <shortName>AI-2 import system permease protein LsrD</shortName>
    </recommendedName>
</protein>
<reference key="1">
    <citation type="journal article" date="2010" name="J. Bacteriol.">
        <title>Genome sequence of the deep-rooted Yersinia pestis strain Angola reveals new insights into the evolution and pangenome of the plague bacterium.</title>
        <authorList>
            <person name="Eppinger M."/>
            <person name="Worsham P.L."/>
            <person name="Nikolich M.P."/>
            <person name="Riley D.R."/>
            <person name="Sebastian Y."/>
            <person name="Mou S."/>
            <person name="Achtman M."/>
            <person name="Lindler L.E."/>
            <person name="Ravel J."/>
        </authorList>
    </citation>
    <scope>NUCLEOTIDE SEQUENCE [LARGE SCALE GENOMIC DNA]</scope>
    <source>
        <strain>Angola</strain>
    </source>
</reference>
<proteinExistence type="inferred from homology"/>
<keyword id="KW-0997">Cell inner membrane</keyword>
<keyword id="KW-1003">Cell membrane</keyword>
<keyword id="KW-0472">Membrane</keyword>
<keyword id="KW-0812">Transmembrane</keyword>
<keyword id="KW-1133">Transmembrane helix</keyword>
<keyword id="KW-0813">Transport</keyword>
<comment type="function">
    <text evidence="1">Part of the ABC transporter complex LsrABCD involved in autoinducer 2 (AI-2) import. Probably responsible for the translocation of the substrate across the membrane (By similarity).</text>
</comment>
<comment type="subunit">
    <text evidence="1">The complex is composed of two ATP-binding proteins (LsrA), two transmembrane proteins (LsrC and LsrD) and a solute-binding protein (LsrB).</text>
</comment>
<comment type="subcellular location">
    <subcellularLocation>
        <location evidence="1">Cell inner membrane</location>
        <topology evidence="1">Multi-pass membrane protein</topology>
    </subcellularLocation>
</comment>
<comment type="similarity">
    <text evidence="3">Belongs to the binding-protein-dependent transport system permease family. AraH/RbsC subfamily.</text>
</comment>
<sequence>MNLYRRYGWELTLAALLVLEILLFGLSNSRMLDINVLLFSTSDFICIGIVALPLTMVIVSGGIDISFGSTIGLCAIFLGIVFQAGVPMSVAIPLTVLVGALCGLINAGLILYTGVNPLVITLGTLYLFGGSALLLSGLSGATGYEGIGGFPAAFTDFANQTLFGLPIPLVIFMLCVLLFWLLMHRTHSGRHVFLIGQSSRVARYSALPIARTLCMLYAMTGVASAISAILLVSYFGSARSDLGASFLMPAITAVVLGGANIYGGSGSILGTALAVLLVGYLQQGLQMIGTPNQISSALSGALLILVVVGRSISLHRHLIYEWLQRRRSRKASA</sequence>
<evidence type="ECO:0000250" key="1"/>
<evidence type="ECO:0000255" key="2"/>
<evidence type="ECO:0000305" key="3"/>
<dbReference type="EMBL" id="CP000901">
    <property type="protein sequence ID" value="ABX88014.1"/>
    <property type="molecule type" value="Genomic_DNA"/>
</dbReference>
<dbReference type="RefSeq" id="WP_002209190.1">
    <property type="nucleotide sequence ID" value="NZ_CP009935.1"/>
</dbReference>
<dbReference type="GeneID" id="57974200"/>
<dbReference type="KEGG" id="ypg:YpAngola_A0860"/>
<dbReference type="PATRIC" id="fig|349746.12.peg.1811"/>
<dbReference type="GO" id="GO:0005886">
    <property type="term" value="C:plasma membrane"/>
    <property type="evidence" value="ECO:0007669"/>
    <property type="project" value="UniProtKB-SubCell"/>
</dbReference>
<dbReference type="GO" id="GO:0022857">
    <property type="term" value="F:transmembrane transporter activity"/>
    <property type="evidence" value="ECO:0007669"/>
    <property type="project" value="InterPro"/>
</dbReference>
<dbReference type="CDD" id="cd06579">
    <property type="entry name" value="TM_PBP1_transp_AraH_like"/>
    <property type="match status" value="1"/>
</dbReference>
<dbReference type="InterPro" id="IPR001851">
    <property type="entry name" value="ABC_transp_permease"/>
</dbReference>
<dbReference type="NCBIfam" id="NF011612">
    <property type="entry name" value="PRK15038.1"/>
    <property type="match status" value="1"/>
</dbReference>
<dbReference type="PANTHER" id="PTHR32196">
    <property type="entry name" value="ABC TRANSPORTER PERMEASE PROTEIN YPHD-RELATED-RELATED"/>
    <property type="match status" value="1"/>
</dbReference>
<dbReference type="PANTHER" id="PTHR32196:SF71">
    <property type="entry name" value="AUTOINDUCER 2 IMPORT SYSTEM PERMEASE PROTEIN LSRD"/>
    <property type="match status" value="1"/>
</dbReference>
<dbReference type="Pfam" id="PF02653">
    <property type="entry name" value="BPD_transp_2"/>
    <property type="match status" value="1"/>
</dbReference>
<gene>
    <name type="primary">lsrD</name>
    <name type="ordered locus">YpAngola_A0860</name>
</gene>